<evidence type="ECO:0000250" key="1">
    <source>
        <dbReference type="UniProtKB" id="P16661"/>
    </source>
</evidence>
<evidence type="ECO:0000255" key="2"/>
<evidence type="ECO:0000305" key="3"/>
<comment type="function">
    <text evidence="1">Participates in the formation of the lipid-linked precursor oligosaccharide for N-glycosylation. Involved in assembling the dolichol-pyrophosphate-GlcNAc(2)-Man(5) intermediate on the cytoplasmic surface of the ER.</text>
</comment>
<comment type="catalytic activity">
    <reaction evidence="1">
        <text>an N,N'-diacetylchitobiosyl-diphospho-di-trans,poly-cis-dolichol + GDP-alpha-D-mannose = a beta-D-Man-(1-&gt;4)-beta-D-GlcNAc-(1-&gt;4)-alpha-D-GlcNAc-diphospho-di-trans,poly-cis-dolichol + GDP + H(+)</text>
        <dbReference type="Rhea" id="RHEA:13865"/>
        <dbReference type="Rhea" id="RHEA-COMP:19510"/>
        <dbReference type="Rhea" id="RHEA-COMP:19511"/>
        <dbReference type="ChEBI" id="CHEBI:15378"/>
        <dbReference type="ChEBI" id="CHEBI:57269"/>
        <dbReference type="ChEBI" id="CHEBI:57527"/>
        <dbReference type="ChEBI" id="CHEBI:58189"/>
        <dbReference type="ChEBI" id="CHEBI:58472"/>
        <dbReference type="EC" id="2.4.1.142"/>
    </reaction>
    <physiologicalReaction direction="left-to-right" evidence="1">
        <dbReference type="Rhea" id="RHEA:13866"/>
    </physiologicalReaction>
</comment>
<comment type="pathway">
    <text evidence="1">Protein modification; protein glycosylation.</text>
</comment>
<comment type="subcellular location">
    <subcellularLocation>
        <location evidence="1">Endoplasmic reticulum membrane</location>
        <topology evidence="1">Single-pass membrane protein</topology>
    </subcellularLocation>
</comment>
<comment type="similarity">
    <text evidence="3">Belongs to the glycosyltransferase group 1 family.</text>
</comment>
<dbReference type="EC" id="2.4.1.142" evidence="1"/>
<dbReference type="EMBL" id="CR382131">
    <property type="protein sequence ID" value="CAG80366.1"/>
    <property type="molecule type" value="Genomic_DNA"/>
</dbReference>
<dbReference type="RefSeq" id="XP_504760.1">
    <property type="nucleotide sequence ID" value="XM_504760.1"/>
</dbReference>
<dbReference type="SMR" id="Q6C3K2"/>
<dbReference type="FunCoup" id="Q6C3K2">
    <property type="interactions" value="934"/>
</dbReference>
<dbReference type="STRING" id="284591.Q6C3K2"/>
<dbReference type="CAZy" id="GT33">
    <property type="family name" value="Glycosyltransferase Family 33"/>
</dbReference>
<dbReference type="EnsemblFungi" id="CAG80366">
    <property type="protein sequence ID" value="CAG80366"/>
    <property type="gene ID" value="YALI0_E34133g"/>
</dbReference>
<dbReference type="KEGG" id="yli:2911951"/>
<dbReference type="VEuPathDB" id="FungiDB:YALI0_E34133g"/>
<dbReference type="HOGENOM" id="CLU_012079_0_0_1"/>
<dbReference type="InParanoid" id="Q6C3K2"/>
<dbReference type="OMA" id="CKLIIDW"/>
<dbReference type="OrthoDB" id="107865at4891"/>
<dbReference type="UniPathway" id="UPA00378"/>
<dbReference type="Proteomes" id="UP000001300">
    <property type="component" value="Chromosome E"/>
</dbReference>
<dbReference type="GO" id="GO:0098554">
    <property type="term" value="C:cytoplasmic side of endoplasmic reticulum membrane"/>
    <property type="evidence" value="ECO:0000250"/>
    <property type="project" value="UniProtKB"/>
</dbReference>
<dbReference type="GO" id="GO:0005783">
    <property type="term" value="C:endoplasmic reticulum"/>
    <property type="evidence" value="ECO:0000318"/>
    <property type="project" value="GO_Central"/>
</dbReference>
<dbReference type="GO" id="GO:0004578">
    <property type="term" value="F:chitobiosyldiphosphodolichol beta-mannosyltransferase activity"/>
    <property type="evidence" value="ECO:0000250"/>
    <property type="project" value="UniProtKB"/>
</dbReference>
<dbReference type="GO" id="GO:0000030">
    <property type="term" value="F:mannosyltransferase activity"/>
    <property type="evidence" value="ECO:0000318"/>
    <property type="project" value="GO_Central"/>
</dbReference>
<dbReference type="GO" id="GO:0006488">
    <property type="term" value="P:dolichol-linked oligosaccharide biosynthetic process"/>
    <property type="evidence" value="ECO:0000250"/>
    <property type="project" value="UniProtKB"/>
</dbReference>
<dbReference type="GO" id="GO:0006486">
    <property type="term" value="P:protein glycosylation"/>
    <property type="evidence" value="ECO:0000318"/>
    <property type="project" value="GO_Central"/>
</dbReference>
<dbReference type="CDD" id="cd03816">
    <property type="entry name" value="GT33_ALG1-like"/>
    <property type="match status" value="1"/>
</dbReference>
<dbReference type="FunFam" id="3.40.50.2000:FF:000599">
    <property type="entry name" value="Chitobiosyldiphosphodolichol beta-mannosyltransferase"/>
    <property type="match status" value="1"/>
</dbReference>
<dbReference type="Gene3D" id="3.40.50.2000">
    <property type="entry name" value="Glycogen Phosphorylase B"/>
    <property type="match status" value="2"/>
</dbReference>
<dbReference type="InterPro" id="IPR026051">
    <property type="entry name" value="ALG1-like"/>
</dbReference>
<dbReference type="PANTHER" id="PTHR13036">
    <property type="entry name" value="BETA1,4 MANNOSYLTRANSFERASE"/>
    <property type="match status" value="1"/>
</dbReference>
<dbReference type="PANTHER" id="PTHR13036:SF0">
    <property type="entry name" value="CHITOBIOSYLDIPHOSPHODOLICHOL BETA-MANNOSYLTRANSFERASE"/>
    <property type="match status" value="1"/>
</dbReference>
<dbReference type="Pfam" id="PF13692">
    <property type="entry name" value="Glyco_trans_1_4"/>
    <property type="match status" value="1"/>
</dbReference>
<dbReference type="SUPFAM" id="SSF53756">
    <property type="entry name" value="UDP-Glycosyltransferase/glycogen phosphorylase"/>
    <property type="match status" value="1"/>
</dbReference>
<protein>
    <recommendedName>
        <fullName evidence="1">Chitobiosyldiphosphodolichol beta-mannosyltransferase</fullName>
        <ecNumber evidence="1">2.4.1.142</ecNumber>
    </recommendedName>
    <alternativeName>
        <fullName>Asparagine-linked glycosylation protein 1</fullName>
    </alternativeName>
    <alternativeName>
        <fullName>Beta-1,4-mannosyltransferase</fullName>
    </alternativeName>
    <alternativeName>
        <fullName>GDP-Man:GlcNAc2-PP-dolichol mannosyltransferase</fullName>
    </alternativeName>
    <alternativeName>
        <fullName>GDP-mannose-dolichol diphosphochitobiose mannosyltransferase</fullName>
    </alternativeName>
</protein>
<accession>Q6C3K2</accession>
<keyword id="KW-0256">Endoplasmic reticulum</keyword>
<keyword id="KW-0328">Glycosyltransferase</keyword>
<keyword id="KW-0472">Membrane</keyword>
<keyword id="KW-1185">Reference proteome</keyword>
<keyword id="KW-0808">Transferase</keyword>
<keyword id="KW-0812">Transmembrane</keyword>
<keyword id="KW-1133">Transmembrane helix</keyword>
<gene>
    <name type="primary">ALG1</name>
    <name type="ordered locus">YALI0E34133g</name>
</gene>
<organism>
    <name type="scientific">Yarrowia lipolytica (strain CLIB 122 / E 150)</name>
    <name type="common">Yeast</name>
    <name type="synonym">Candida lipolytica</name>
    <dbReference type="NCBI Taxonomy" id="284591"/>
    <lineage>
        <taxon>Eukaryota</taxon>
        <taxon>Fungi</taxon>
        <taxon>Dikarya</taxon>
        <taxon>Ascomycota</taxon>
        <taxon>Saccharomycotina</taxon>
        <taxon>Dipodascomycetes</taxon>
        <taxon>Dipodascales</taxon>
        <taxon>Dipodascales incertae sedis</taxon>
        <taxon>Yarrowia</taxon>
    </lineage>
</organism>
<name>ALG1_YARLI</name>
<reference key="1">
    <citation type="journal article" date="2004" name="Nature">
        <title>Genome evolution in yeasts.</title>
        <authorList>
            <person name="Dujon B."/>
            <person name="Sherman D."/>
            <person name="Fischer G."/>
            <person name="Durrens P."/>
            <person name="Casaregola S."/>
            <person name="Lafontaine I."/>
            <person name="de Montigny J."/>
            <person name="Marck C."/>
            <person name="Neuveglise C."/>
            <person name="Talla E."/>
            <person name="Goffard N."/>
            <person name="Frangeul L."/>
            <person name="Aigle M."/>
            <person name="Anthouard V."/>
            <person name="Babour A."/>
            <person name="Barbe V."/>
            <person name="Barnay S."/>
            <person name="Blanchin S."/>
            <person name="Beckerich J.-M."/>
            <person name="Beyne E."/>
            <person name="Bleykasten C."/>
            <person name="Boisrame A."/>
            <person name="Boyer J."/>
            <person name="Cattolico L."/>
            <person name="Confanioleri F."/>
            <person name="de Daruvar A."/>
            <person name="Despons L."/>
            <person name="Fabre E."/>
            <person name="Fairhead C."/>
            <person name="Ferry-Dumazet H."/>
            <person name="Groppi A."/>
            <person name="Hantraye F."/>
            <person name="Hennequin C."/>
            <person name="Jauniaux N."/>
            <person name="Joyet P."/>
            <person name="Kachouri R."/>
            <person name="Kerrest A."/>
            <person name="Koszul R."/>
            <person name="Lemaire M."/>
            <person name="Lesur I."/>
            <person name="Ma L."/>
            <person name="Muller H."/>
            <person name="Nicaud J.-M."/>
            <person name="Nikolski M."/>
            <person name="Oztas S."/>
            <person name="Ozier-Kalogeropoulos O."/>
            <person name="Pellenz S."/>
            <person name="Potier S."/>
            <person name="Richard G.-F."/>
            <person name="Straub M.-L."/>
            <person name="Suleau A."/>
            <person name="Swennen D."/>
            <person name="Tekaia F."/>
            <person name="Wesolowski-Louvel M."/>
            <person name="Westhof E."/>
            <person name="Wirth B."/>
            <person name="Zeniou-Meyer M."/>
            <person name="Zivanovic Y."/>
            <person name="Bolotin-Fukuhara M."/>
            <person name="Thierry A."/>
            <person name="Bouchier C."/>
            <person name="Caudron B."/>
            <person name="Scarpelli C."/>
            <person name="Gaillardin C."/>
            <person name="Weissenbach J."/>
            <person name="Wincker P."/>
            <person name="Souciet J.-L."/>
        </authorList>
    </citation>
    <scope>NUCLEOTIDE SEQUENCE [LARGE SCALE GENOMIC DNA]</scope>
    <source>
        <strain>CLIB 122 / E 150</strain>
    </source>
</reference>
<proteinExistence type="inferred from homology"/>
<sequence length="463" mass="52711">MKAWHWSVTLVVIYLAIPVILYLLTRKDDRKPLSDIRKRKRTIVLVLGDLGRSPRMLYHARSLARSGHKVDLCGYDGAKPFDEILNNDLIKIHHIPLILNTRKLPFVVFGILKVIRQHWLLISLLYKLRGADYLLVQNPPSIPTLGVVRFYNLFLSTRTKVVLDWHNFGYTILALKLPETHPMVKFAKFYEGFFGGRAFVHLCVTVLMGQAMRKTFGMSGRRIVPLHDRPAFHFKPLSESEKLDVLRDFKETLYDDMTADHKIIVSSTSYTPDENFNILLDALALYDESKLDLPPLRVIITGKGPMMPEFLAKVEKLQLKRVSIRTAWLEFADYPRILGAAHLGVSLHESSSGYDLPMKVVDMFGCGIPVVSVDYAALSELVKTNTNGVAVKGHVEMGNTFMSLFSNRGKLDNIKRGAMIESRNTWDQTWVKTVGPLFDIGEYVQQRPDEDYDFSSSSSDDDH</sequence>
<feature type="chain" id="PRO_0000080258" description="Chitobiosyldiphosphodolichol beta-mannosyltransferase">
    <location>
        <begin position="1"/>
        <end position="463"/>
    </location>
</feature>
<feature type="topological domain" description="Lumenal" evidence="1">
    <location>
        <begin position="1"/>
        <end position="3"/>
    </location>
</feature>
<feature type="transmembrane region" description="Helical" evidence="2">
    <location>
        <begin position="4"/>
        <end position="24"/>
    </location>
</feature>
<feature type="topological domain" description="Cytoplasmic" evidence="1">
    <location>
        <begin position="25"/>
        <end position="105"/>
    </location>
</feature>
<feature type="intramembrane region" description="Helical" evidence="2">
    <location>
        <begin position="106"/>
        <end position="126"/>
    </location>
</feature>
<feature type="topological domain" description="Lumenal" evidence="3">
    <location>
        <begin position="127"/>
        <end position="463"/>
    </location>
</feature>